<sequence length="466" mass="53684">MITLYNTLTRQKEVFKPIEPGKVKMYVCGPTVYNYIHIGNARPAINYDVVRRYFEYQGYNVEYVSNFTDVDDKLIKRSQELNQSVPEIAEKYIAAFHEDVGALNVRKATSNPRVMDHMDDIIQFIKDLVDQGYAYESGGDVYFRTRKFEGYGKLSHQSIDDLKVGARIDAGEHKEDALDFTLWKKAKPGEISWNSPFGEGRPGWHIECSVMAFHELGPTIDIHAGGSDLQFPHHENEIAQSEAHNHAPFANYWMHNGFINIDNEKMSKSLGNFILVHDIIKEVDPDVLRFFMISVHYRSPINYNLELVESARSGLERIRNSYQLIEERAQIATNIENQQTYIDQIDAILNRFETVMNDDFNTANAITAWYDLAKLANKYVLENTTSTEVIDKFKAVYQIFSDVLGVPLKSKNADELLDEDVEKLIEERNEARKNKDFARADEIRDMLKSQNIILEDTPQGVRFKRG</sequence>
<reference key="1">
    <citation type="journal article" date="2001" name="Lancet">
        <title>Whole genome sequencing of meticillin-resistant Staphylococcus aureus.</title>
        <authorList>
            <person name="Kuroda M."/>
            <person name="Ohta T."/>
            <person name="Uchiyama I."/>
            <person name="Baba T."/>
            <person name="Yuzawa H."/>
            <person name="Kobayashi I."/>
            <person name="Cui L."/>
            <person name="Oguchi A."/>
            <person name="Aoki K."/>
            <person name="Nagai Y."/>
            <person name="Lian J.-Q."/>
            <person name="Ito T."/>
            <person name="Kanamori M."/>
            <person name="Matsumaru H."/>
            <person name="Maruyama A."/>
            <person name="Murakami H."/>
            <person name="Hosoyama A."/>
            <person name="Mizutani-Ui Y."/>
            <person name="Takahashi N.K."/>
            <person name="Sawano T."/>
            <person name="Inoue R."/>
            <person name="Kaito C."/>
            <person name="Sekimizu K."/>
            <person name="Hirakawa H."/>
            <person name="Kuhara S."/>
            <person name="Goto S."/>
            <person name="Yabuzaki J."/>
            <person name="Kanehisa M."/>
            <person name="Yamashita A."/>
            <person name="Oshima K."/>
            <person name="Furuya K."/>
            <person name="Yoshino C."/>
            <person name="Shiba T."/>
            <person name="Hattori M."/>
            <person name="Ogasawara N."/>
            <person name="Hayashi H."/>
            <person name="Hiramatsu K."/>
        </authorList>
    </citation>
    <scope>NUCLEOTIDE SEQUENCE [LARGE SCALE GENOMIC DNA]</scope>
    <source>
        <strain>Mu50 / ATCC 700699</strain>
    </source>
</reference>
<accession>Q932G0</accession>
<protein>
    <recommendedName>
        <fullName evidence="1">Cysteine--tRNA ligase</fullName>
        <ecNumber evidence="1">6.1.1.16</ecNumber>
    </recommendedName>
    <alternativeName>
        <fullName evidence="1">Cysteinyl-tRNA synthetase</fullName>
        <shortName evidence="1">CysRS</shortName>
    </alternativeName>
</protein>
<keyword id="KW-0030">Aminoacyl-tRNA synthetase</keyword>
<keyword id="KW-0067">ATP-binding</keyword>
<keyword id="KW-0963">Cytoplasm</keyword>
<keyword id="KW-0436">Ligase</keyword>
<keyword id="KW-0479">Metal-binding</keyword>
<keyword id="KW-0547">Nucleotide-binding</keyword>
<keyword id="KW-0648">Protein biosynthesis</keyword>
<keyword id="KW-0862">Zinc</keyword>
<feature type="chain" id="PRO_0000159478" description="Cysteine--tRNA ligase">
    <location>
        <begin position="1"/>
        <end position="466"/>
    </location>
</feature>
<feature type="short sequence motif" description="'HIGH' region">
    <location>
        <begin position="30"/>
        <end position="40"/>
    </location>
</feature>
<feature type="short sequence motif" description="'KMSKS' region">
    <location>
        <begin position="265"/>
        <end position="269"/>
    </location>
</feature>
<feature type="binding site" evidence="1">
    <location>
        <position position="28"/>
    </location>
    <ligand>
        <name>Zn(2+)</name>
        <dbReference type="ChEBI" id="CHEBI:29105"/>
    </ligand>
</feature>
<feature type="binding site" evidence="1">
    <location>
        <position position="208"/>
    </location>
    <ligand>
        <name>Zn(2+)</name>
        <dbReference type="ChEBI" id="CHEBI:29105"/>
    </ligand>
</feature>
<feature type="binding site" evidence="1">
    <location>
        <position position="233"/>
    </location>
    <ligand>
        <name>Zn(2+)</name>
        <dbReference type="ChEBI" id="CHEBI:29105"/>
    </ligand>
</feature>
<feature type="binding site" evidence="1">
    <location>
        <position position="237"/>
    </location>
    <ligand>
        <name>Zn(2+)</name>
        <dbReference type="ChEBI" id="CHEBI:29105"/>
    </ligand>
</feature>
<feature type="binding site" evidence="1">
    <location>
        <position position="268"/>
    </location>
    <ligand>
        <name>ATP</name>
        <dbReference type="ChEBI" id="CHEBI:30616"/>
    </ligand>
</feature>
<dbReference type="EC" id="6.1.1.16" evidence="1"/>
<dbReference type="EMBL" id="BA000017">
    <property type="protein sequence ID" value="BAB56692.2"/>
    <property type="molecule type" value="Genomic_DNA"/>
</dbReference>
<dbReference type="RefSeq" id="WP_000631969.1">
    <property type="nucleotide sequence ID" value="NC_002758.2"/>
</dbReference>
<dbReference type="SMR" id="Q932G0"/>
<dbReference type="KEGG" id="sav:SAV0530"/>
<dbReference type="HOGENOM" id="CLU_013528_0_1_9"/>
<dbReference type="Proteomes" id="UP000002481">
    <property type="component" value="Chromosome"/>
</dbReference>
<dbReference type="GO" id="GO:0005829">
    <property type="term" value="C:cytosol"/>
    <property type="evidence" value="ECO:0007669"/>
    <property type="project" value="TreeGrafter"/>
</dbReference>
<dbReference type="GO" id="GO:0005524">
    <property type="term" value="F:ATP binding"/>
    <property type="evidence" value="ECO:0007669"/>
    <property type="project" value="UniProtKB-UniRule"/>
</dbReference>
<dbReference type="GO" id="GO:0004817">
    <property type="term" value="F:cysteine-tRNA ligase activity"/>
    <property type="evidence" value="ECO:0007669"/>
    <property type="project" value="UniProtKB-UniRule"/>
</dbReference>
<dbReference type="GO" id="GO:0008270">
    <property type="term" value="F:zinc ion binding"/>
    <property type="evidence" value="ECO:0007669"/>
    <property type="project" value="UniProtKB-UniRule"/>
</dbReference>
<dbReference type="GO" id="GO:0006423">
    <property type="term" value="P:cysteinyl-tRNA aminoacylation"/>
    <property type="evidence" value="ECO:0007669"/>
    <property type="project" value="UniProtKB-UniRule"/>
</dbReference>
<dbReference type="CDD" id="cd00672">
    <property type="entry name" value="CysRS_core"/>
    <property type="match status" value="1"/>
</dbReference>
<dbReference type="FunFam" id="1.20.120.1910:FF:000002">
    <property type="entry name" value="Cysteine--tRNA ligase"/>
    <property type="match status" value="1"/>
</dbReference>
<dbReference type="FunFam" id="3.40.50.620:FF:000009">
    <property type="entry name" value="Cysteine--tRNA ligase"/>
    <property type="match status" value="1"/>
</dbReference>
<dbReference type="Gene3D" id="1.20.120.1910">
    <property type="entry name" value="Cysteine-tRNA ligase, C-terminal anti-codon recognition domain"/>
    <property type="match status" value="1"/>
</dbReference>
<dbReference type="Gene3D" id="3.40.50.620">
    <property type="entry name" value="HUPs"/>
    <property type="match status" value="1"/>
</dbReference>
<dbReference type="HAMAP" id="MF_00041">
    <property type="entry name" value="Cys_tRNA_synth"/>
    <property type="match status" value="1"/>
</dbReference>
<dbReference type="InterPro" id="IPR015803">
    <property type="entry name" value="Cys-tRNA-ligase"/>
</dbReference>
<dbReference type="InterPro" id="IPR015273">
    <property type="entry name" value="Cys-tRNA-synt_Ia_DALR"/>
</dbReference>
<dbReference type="InterPro" id="IPR024909">
    <property type="entry name" value="Cys-tRNA/MSH_ligase"/>
</dbReference>
<dbReference type="InterPro" id="IPR056411">
    <property type="entry name" value="CysS_C"/>
</dbReference>
<dbReference type="InterPro" id="IPR014729">
    <property type="entry name" value="Rossmann-like_a/b/a_fold"/>
</dbReference>
<dbReference type="InterPro" id="IPR032678">
    <property type="entry name" value="tRNA-synt_1_cat_dom"/>
</dbReference>
<dbReference type="InterPro" id="IPR009080">
    <property type="entry name" value="tRNAsynth_Ia_anticodon-bd"/>
</dbReference>
<dbReference type="NCBIfam" id="TIGR00435">
    <property type="entry name" value="cysS"/>
    <property type="match status" value="1"/>
</dbReference>
<dbReference type="PANTHER" id="PTHR10890:SF3">
    <property type="entry name" value="CYSTEINE--TRNA LIGASE, CYTOPLASMIC"/>
    <property type="match status" value="1"/>
</dbReference>
<dbReference type="PANTHER" id="PTHR10890">
    <property type="entry name" value="CYSTEINYL-TRNA SYNTHETASE"/>
    <property type="match status" value="1"/>
</dbReference>
<dbReference type="Pfam" id="PF23493">
    <property type="entry name" value="CysS_C"/>
    <property type="match status" value="1"/>
</dbReference>
<dbReference type="Pfam" id="PF09190">
    <property type="entry name" value="DALR_2"/>
    <property type="match status" value="1"/>
</dbReference>
<dbReference type="Pfam" id="PF01406">
    <property type="entry name" value="tRNA-synt_1e"/>
    <property type="match status" value="1"/>
</dbReference>
<dbReference type="PRINTS" id="PR00983">
    <property type="entry name" value="TRNASYNTHCYS"/>
</dbReference>
<dbReference type="SMART" id="SM00840">
    <property type="entry name" value="DALR_2"/>
    <property type="match status" value="1"/>
</dbReference>
<dbReference type="SUPFAM" id="SSF47323">
    <property type="entry name" value="Anticodon-binding domain of a subclass of class I aminoacyl-tRNA synthetases"/>
    <property type="match status" value="1"/>
</dbReference>
<dbReference type="SUPFAM" id="SSF52374">
    <property type="entry name" value="Nucleotidylyl transferase"/>
    <property type="match status" value="1"/>
</dbReference>
<organism>
    <name type="scientific">Staphylococcus aureus (strain Mu50 / ATCC 700699)</name>
    <dbReference type="NCBI Taxonomy" id="158878"/>
    <lineage>
        <taxon>Bacteria</taxon>
        <taxon>Bacillati</taxon>
        <taxon>Bacillota</taxon>
        <taxon>Bacilli</taxon>
        <taxon>Bacillales</taxon>
        <taxon>Staphylococcaceae</taxon>
        <taxon>Staphylococcus</taxon>
    </lineage>
</organism>
<gene>
    <name evidence="1" type="primary">cysS</name>
    <name type="ordered locus">SAV0530</name>
</gene>
<name>SYC_STAAM</name>
<evidence type="ECO:0000255" key="1">
    <source>
        <dbReference type="HAMAP-Rule" id="MF_00041"/>
    </source>
</evidence>
<proteinExistence type="inferred from homology"/>
<comment type="catalytic activity">
    <reaction evidence="1">
        <text>tRNA(Cys) + L-cysteine + ATP = L-cysteinyl-tRNA(Cys) + AMP + diphosphate</text>
        <dbReference type="Rhea" id="RHEA:17773"/>
        <dbReference type="Rhea" id="RHEA-COMP:9661"/>
        <dbReference type="Rhea" id="RHEA-COMP:9679"/>
        <dbReference type="ChEBI" id="CHEBI:30616"/>
        <dbReference type="ChEBI" id="CHEBI:33019"/>
        <dbReference type="ChEBI" id="CHEBI:35235"/>
        <dbReference type="ChEBI" id="CHEBI:78442"/>
        <dbReference type="ChEBI" id="CHEBI:78517"/>
        <dbReference type="ChEBI" id="CHEBI:456215"/>
        <dbReference type="EC" id="6.1.1.16"/>
    </reaction>
</comment>
<comment type="cofactor">
    <cofactor evidence="1">
        <name>Zn(2+)</name>
        <dbReference type="ChEBI" id="CHEBI:29105"/>
    </cofactor>
    <text evidence="1">Binds 1 zinc ion per subunit.</text>
</comment>
<comment type="subunit">
    <text evidence="1">Monomer.</text>
</comment>
<comment type="subcellular location">
    <subcellularLocation>
        <location evidence="1">Cytoplasm</location>
    </subcellularLocation>
</comment>
<comment type="similarity">
    <text evidence="1">Belongs to the class-I aminoacyl-tRNA synthetase family.</text>
</comment>